<gene>
    <name evidence="1" type="primary">bchN</name>
    <name type="ordered locus">Dshi_3534</name>
</gene>
<organism>
    <name type="scientific">Dinoroseobacter shibae (strain DSM 16493 / NCIMB 14021 / DFL 12)</name>
    <dbReference type="NCBI Taxonomy" id="398580"/>
    <lineage>
        <taxon>Bacteria</taxon>
        <taxon>Pseudomonadati</taxon>
        <taxon>Pseudomonadota</taxon>
        <taxon>Alphaproteobacteria</taxon>
        <taxon>Rhodobacterales</taxon>
        <taxon>Roseobacteraceae</taxon>
        <taxon>Dinoroseobacter</taxon>
    </lineage>
</organism>
<reference key="1">
    <citation type="journal article" date="2010" name="ISME J.">
        <title>The complete genome sequence of the algal symbiont Dinoroseobacter shibae: a hitchhiker's guide to life in the sea.</title>
        <authorList>
            <person name="Wagner-Dobler I."/>
            <person name="Ballhausen B."/>
            <person name="Berger M."/>
            <person name="Brinkhoff T."/>
            <person name="Buchholz I."/>
            <person name="Bunk B."/>
            <person name="Cypionka H."/>
            <person name="Daniel R."/>
            <person name="Drepper T."/>
            <person name="Gerdts G."/>
            <person name="Hahnke S."/>
            <person name="Han C."/>
            <person name="Jahn D."/>
            <person name="Kalhoefer D."/>
            <person name="Kiss H."/>
            <person name="Klenk H.P."/>
            <person name="Kyrpides N."/>
            <person name="Liebl W."/>
            <person name="Liesegang H."/>
            <person name="Meincke L."/>
            <person name="Pati A."/>
            <person name="Petersen J."/>
            <person name="Piekarski T."/>
            <person name="Pommerenke C."/>
            <person name="Pradella S."/>
            <person name="Pukall R."/>
            <person name="Rabus R."/>
            <person name="Stackebrandt E."/>
            <person name="Thole S."/>
            <person name="Thompson L."/>
            <person name="Tielen P."/>
            <person name="Tomasch J."/>
            <person name="von Jan M."/>
            <person name="Wanphrut N."/>
            <person name="Wichels A."/>
            <person name="Zech H."/>
            <person name="Simon M."/>
        </authorList>
    </citation>
    <scope>NUCLEOTIDE SEQUENCE [LARGE SCALE GENOMIC DNA]</scope>
    <source>
        <strain>DSM 16493 / NCIMB 14021 / DFL 12</strain>
    </source>
</reference>
<evidence type="ECO:0000255" key="1">
    <source>
        <dbReference type="HAMAP-Rule" id="MF_00352"/>
    </source>
</evidence>
<comment type="function">
    <text evidence="1">Component of the dark-operative protochlorophyllide reductase (DPOR) that uses Mg-ATP and reduced ferredoxin to reduce ring D of protochlorophyllide (Pchlide) to form chlorophyllide a (Chlide). This reaction is light-independent. The NB-protein (BchN-BchB) is the catalytic component of the complex.</text>
</comment>
<comment type="catalytic activity">
    <reaction evidence="1">
        <text>chlorophyllide a + oxidized 2[4Fe-4S]-[ferredoxin] + 2 ADP + 2 phosphate = protochlorophyllide a + reduced 2[4Fe-4S]-[ferredoxin] + 2 ATP + 2 H2O</text>
        <dbReference type="Rhea" id="RHEA:28202"/>
        <dbReference type="Rhea" id="RHEA-COMP:10002"/>
        <dbReference type="Rhea" id="RHEA-COMP:10004"/>
        <dbReference type="ChEBI" id="CHEBI:15377"/>
        <dbReference type="ChEBI" id="CHEBI:30616"/>
        <dbReference type="ChEBI" id="CHEBI:33722"/>
        <dbReference type="ChEBI" id="CHEBI:33723"/>
        <dbReference type="ChEBI" id="CHEBI:43474"/>
        <dbReference type="ChEBI" id="CHEBI:83348"/>
        <dbReference type="ChEBI" id="CHEBI:83350"/>
        <dbReference type="ChEBI" id="CHEBI:456216"/>
        <dbReference type="EC" id="1.3.7.7"/>
    </reaction>
</comment>
<comment type="cofactor">
    <cofactor evidence="1">
        <name>[4Fe-4S] cluster</name>
        <dbReference type="ChEBI" id="CHEBI:49883"/>
    </cofactor>
    <text evidence="1">Binds 1 [4Fe-4S] cluster per heterodimer. The cluster is bound at the heterodimer interface by residues from both subunits.</text>
</comment>
<comment type="pathway">
    <text evidence="1">Porphyrin-containing compound metabolism; bacteriochlorophyll biosynthesis (light-independent).</text>
</comment>
<comment type="subunit">
    <text evidence="1">Protochlorophyllide reductase is composed of three subunits; BchL, BchN and BchB. Forms a heterotetramer of two BchB and two BchN subunits.</text>
</comment>
<comment type="similarity">
    <text evidence="1">Belongs to the BchN/ChlN family.</text>
</comment>
<accession>A8LQ27</accession>
<protein>
    <recommendedName>
        <fullName evidence="1">Light-independent protochlorophyllide reductase subunit N</fullName>
        <shortName evidence="1">DPOR subunit N</shortName>
        <shortName evidence="1">LI-POR subunit N</shortName>
        <ecNumber evidence="1">1.3.7.7</ecNumber>
    </recommendedName>
</protein>
<sequence>MNKPVTTIAPGCRDTPILKQRGQREVFCGLTGIIWLHRKMQDAFFLVVGSRTCAHLLQSAAGVMIFAEPRFGTAILEEKDLAGLADAQDEIDREVERLLSRRPDIKQLFLVGSCPSEVIKLDLGRAAERLTRKFAPHVRVLNYSGSGIETTFTQGEDACLESMVPVLPETEARELLLVGALPDVVEDQALGLLDKMGIGPVRVLPAPRADGTPGVGPNTVYAVLQPFLGETCSALDRRGARRIDAPFPFGEEGTTLWLRAIAREFGVSDETFEAVTAAPRARARKAIAAAAETLRDKSIFFFPDSQLEIPLARFLTRECGMAAIEVGAPYIHKGLVGPDLDLLAAGPTLSEGQDVDMQLDRCRAARPDLTVCGLGLANPLEAEGLTTKWAIELVFTPVHFYEQAGDLAGLFARPIRRREKLRLEVAE</sequence>
<feature type="chain" id="PRO_0000324004" description="Light-independent protochlorophyllide reductase subunit N">
    <location>
        <begin position="1"/>
        <end position="427"/>
    </location>
</feature>
<feature type="binding site" evidence="1">
    <location>
        <position position="28"/>
    </location>
    <ligand>
        <name>[4Fe-4S] cluster</name>
        <dbReference type="ChEBI" id="CHEBI:49883"/>
        <note>ligand shared with heterodimeric partner</note>
    </ligand>
</feature>
<feature type="binding site" evidence="1">
    <location>
        <position position="53"/>
    </location>
    <ligand>
        <name>[4Fe-4S] cluster</name>
        <dbReference type="ChEBI" id="CHEBI:49883"/>
        <note>ligand shared with heterodimeric partner</note>
    </ligand>
</feature>
<feature type="binding site" evidence="1">
    <location>
        <position position="114"/>
    </location>
    <ligand>
        <name>[4Fe-4S] cluster</name>
        <dbReference type="ChEBI" id="CHEBI:49883"/>
        <note>ligand shared with heterodimeric partner</note>
    </ligand>
</feature>
<dbReference type="EC" id="1.3.7.7" evidence="1"/>
<dbReference type="EMBL" id="CP000830">
    <property type="protein sequence ID" value="ABV95267.1"/>
    <property type="molecule type" value="Genomic_DNA"/>
</dbReference>
<dbReference type="RefSeq" id="WP_012180190.1">
    <property type="nucleotide sequence ID" value="NC_009952.1"/>
</dbReference>
<dbReference type="SMR" id="A8LQ27"/>
<dbReference type="STRING" id="398580.Dshi_3534"/>
<dbReference type="KEGG" id="dsh:Dshi_3534"/>
<dbReference type="eggNOG" id="COG2710">
    <property type="taxonomic scope" value="Bacteria"/>
</dbReference>
<dbReference type="HOGENOM" id="CLU_037170_0_0_5"/>
<dbReference type="OrthoDB" id="5714774at2"/>
<dbReference type="UniPathway" id="UPA00671"/>
<dbReference type="Proteomes" id="UP000006833">
    <property type="component" value="Chromosome"/>
</dbReference>
<dbReference type="GO" id="GO:0051539">
    <property type="term" value="F:4 iron, 4 sulfur cluster binding"/>
    <property type="evidence" value="ECO:0007669"/>
    <property type="project" value="UniProtKB-UniRule"/>
</dbReference>
<dbReference type="GO" id="GO:0005524">
    <property type="term" value="F:ATP binding"/>
    <property type="evidence" value="ECO:0007669"/>
    <property type="project" value="UniProtKB-UniRule"/>
</dbReference>
<dbReference type="GO" id="GO:0046872">
    <property type="term" value="F:metal ion binding"/>
    <property type="evidence" value="ECO:0007669"/>
    <property type="project" value="UniProtKB-KW"/>
</dbReference>
<dbReference type="GO" id="GO:0016730">
    <property type="term" value="F:oxidoreductase activity, acting on iron-sulfur proteins as donors"/>
    <property type="evidence" value="ECO:0007669"/>
    <property type="project" value="InterPro"/>
</dbReference>
<dbReference type="GO" id="GO:0016636">
    <property type="term" value="F:oxidoreductase activity, acting on the CH-CH group of donors, iron-sulfur protein as acceptor"/>
    <property type="evidence" value="ECO:0007669"/>
    <property type="project" value="UniProtKB-UniRule"/>
</dbReference>
<dbReference type="GO" id="GO:0036070">
    <property type="term" value="P:light-independent bacteriochlorophyll biosynthetic process"/>
    <property type="evidence" value="ECO:0007669"/>
    <property type="project" value="UniProtKB-UniRule"/>
</dbReference>
<dbReference type="GO" id="GO:0019685">
    <property type="term" value="P:photosynthesis, dark reaction"/>
    <property type="evidence" value="ECO:0007669"/>
    <property type="project" value="InterPro"/>
</dbReference>
<dbReference type="Gene3D" id="3.40.50.1980">
    <property type="entry name" value="Nitrogenase molybdenum iron protein domain"/>
    <property type="match status" value="3"/>
</dbReference>
<dbReference type="HAMAP" id="MF_00352">
    <property type="entry name" value="ChlN_BchN"/>
    <property type="match status" value="1"/>
</dbReference>
<dbReference type="InterPro" id="IPR050293">
    <property type="entry name" value="LIPOR_BchN/ChlN"/>
</dbReference>
<dbReference type="InterPro" id="IPR000510">
    <property type="entry name" value="Nase/OxRdtase_comp1"/>
</dbReference>
<dbReference type="InterPro" id="IPR005970">
    <property type="entry name" value="Protochl_reductN"/>
</dbReference>
<dbReference type="NCBIfam" id="TIGR01279">
    <property type="entry name" value="DPOR_bchN"/>
    <property type="match status" value="1"/>
</dbReference>
<dbReference type="NCBIfam" id="NF002768">
    <property type="entry name" value="PRK02842.1"/>
    <property type="match status" value="1"/>
</dbReference>
<dbReference type="PANTHER" id="PTHR39429">
    <property type="entry name" value="LIGHT-INDEPENDENT PROTOCHLOROPHYLLIDE REDUCTASE SUBUNIT N"/>
    <property type="match status" value="1"/>
</dbReference>
<dbReference type="PANTHER" id="PTHR39429:SF3">
    <property type="entry name" value="LIGHT-INDEPENDENT PROTOCHLOROPHYLLIDE REDUCTASE SUBUNIT N"/>
    <property type="match status" value="1"/>
</dbReference>
<dbReference type="Pfam" id="PF00148">
    <property type="entry name" value="Oxidored_nitro"/>
    <property type="match status" value="1"/>
</dbReference>
<dbReference type="PIRSF" id="PIRSF000162">
    <property type="entry name" value="P_chlorophyll_rd"/>
    <property type="match status" value="1"/>
</dbReference>
<dbReference type="SUPFAM" id="SSF53807">
    <property type="entry name" value="Helical backbone' metal receptor"/>
    <property type="match status" value="1"/>
</dbReference>
<name>BCHN_DINSH</name>
<keyword id="KW-0004">4Fe-4S</keyword>
<keyword id="KW-0067">ATP-binding</keyword>
<keyword id="KW-0077">Bacteriochlorophyll biosynthesis</keyword>
<keyword id="KW-0149">Chlorophyll biosynthesis</keyword>
<keyword id="KW-0408">Iron</keyword>
<keyword id="KW-0411">Iron-sulfur</keyword>
<keyword id="KW-0479">Metal-binding</keyword>
<keyword id="KW-0547">Nucleotide-binding</keyword>
<keyword id="KW-0560">Oxidoreductase</keyword>
<keyword id="KW-0602">Photosynthesis</keyword>
<keyword id="KW-1185">Reference proteome</keyword>
<proteinExistence type="inferred from homology"/>